<proteinExistence type="evidence at protein level"/>
<feature type="chain" id="PRO_0000429742" description="Basic phospholipase A2 BmatTX-III">
    <location>
        <begin position="1"/>
        <end position="32" status="greater than"/>
    </location>
</feature>
<feature type="binding site" evidence="1">
    <location>
        <position position="27"/>
    </location>
    <ligand>
        <name>Ca(2+)</name>
        <dbReference type="ChEBI" id="CHEBI:29108"/>
    </ligand>
</feature>
<feature type="binding site" evidence="1">
    <location>
        <position position="29"/>
    </location>
    <ligand>
        <name>Ca(2+)</name>
        <dbReference type="ChEBI" id="CHEBI:29108"/>
    </ligand>
</feature>
<feature type="binding site" evidence="1">
    <location>
        <position position="31"/>
    </location>
    <ligand>
        <name>Ca(2+)</name>
        <dbReference type="ChEBI" id="CHEBI:29108"/>
    </ligand>
</feature>
<feature type="disulfide bond" evidence="2">
    <location>
        <begin position="26"/>
        <end status="unknown"/>
    </location>
</feature>
<feature type="disulfide bond" evidence="2">
    <location>
        <begin position="28"/>
        <end status="unknown"/>
    </location>
</feature>
<feature type="non-terminal residue">
    <location>
        <position position="32"/>
    </location>
</feature>
<dbReference type="EC" id="3.1.1.4" evidence="3"/>
<dbReference type="SMR" id="P0DMK1"/>
<dbReference type="GO" id="GO:0005576">
    <property type="term" value="C:extracellular region"/>
    <property type="evidence" value="ECO:0007669"/>
    <property type="project" value="UniProtKB-SubCell"/>
</dbReference>
<dbReference type="GO" id="GO:0005509">
    <property type="term" value="F:calcium ion binding"/>
    <property type="evidence" value="ECO:0007669"/>
    <property type="project" value="InterPro"/>
</dbReference>
<dbReference type="GO" id="GO:0004623">
    <property type="term" value="F:phospholipase A2 activity"/>
    <property type="evidence" value="ECO:0007669"/>
    <property type="project" value="UniProtKB-EC"/>
</dbReference>
<dbReference type="GO" id="GO:0090729">
    <property type="term" value="F:toxin activity"/>
    <property type="evidence" value="ECO:0007669"/>
    <property type="project" value="UniProtKB-KW"/>
</dbReference>
<dbReference type="GO" id="GO:0050482">
    <property type="term" value="P:arachidonate secretion"/>
    <property type="evidence" value="ECO:0007669"/>
    <property type="project" value="InterPro"/>
</dbReference>
<dbReference type="GO" id="GO:0016042">
    <property type="term" value="P:lipid catabolic process"/>
    <property type="evidence" value="ECO:0007669"/>
    <property type="project" value="UniProtKB-KW"/>
</dbReference>
<dbReference type="GO" id="GO:0006644">
    <property type="term" value="P:phospholipid metabolic process"/>
    <property type="evidence" value="ECO:0007669"/>
    <property type="project" value="InterPro"/>
</dbReference>
<dbReference type="Gene3D" id="1.20.90.10">
    <property type="entry name" value="Phospholipase A2 domain"/>
    <property type="match status" value="1"/>
</dbReference>
<dbReference type="InterPro" id="IPR001211">
    <property type="entry name" value="PLipase_A2"/>
</dbReference>
<dbReference type="InterPro" id="IPR016090">
    <property type="entry name" value="PLipase_A2_dom"/>
</dbReference>
<dbReference type="InterPro" id="IPR036444">
    <property type="entry name" value="PLipase_A2_dom_sf"/>
</dbReference>
<dbReference type="Pfam" id="PF00068">
    <property type="entry name" value="Phospholip_A2_1"/>
    <property type="match status" value="1"/>
</dbReference>
<dbReference type="PRINTS" id="PR00389">
    <property type="entry name" value="PHPHLIPASEA2"/>
</dbReference>
<dbReference type="SUPFAM" id="SSF48619">
    <property type="entry name" value="Phospholipase A2, PLA2"/>
    <property type="match status" value="1"/>
</dbReference>
<organism>
    <name type="scientific">Bothrops mattogrossensis</name>
    <name type="common">Pitviper</name>
    <name type="synonym">Bothrops neuwiedi mattogrossensis</name>
    <dbReference type="NCBI Taxonomy" id="1171125"/>
    <lineage>
        <taxon>Eukaryota</taxon>
        <taxon>Metazoa</taxon>
        <taxon>Chordata</taxon>
        <taxon>Craniata</taxon>
        <taxon>Vertebrata</taxon>
        <taxon>Euteleostomi</taxon>
        <taxon>Lepidosauria</taxon>
        <taxon>Squamata</taxon>
        <taxon>Bifurcata</taxon>
        <taxon>Unidentata</taxon>
        <taxon>Episquamata</taxon>
        <taxon>Toxicofera</taxon>
        <taxon>Serpentes</taxon>
        <taxon>Colubroidea</taxon>
        <taxon>Viperidae</taxon>
        <taxon>Crotalinae</taxon>
        <taxon>Bothrops</taxon>
    </lineage>
</organism>
<evidence type="ECO:0000250" key="1"/>
<evidence type="ECO:0000250" key="2">
    <source>
        <dbReference type="UniProtKB" id="Q90249"/>
    </source>
</evidence>
<evidence type="ECO:0000269" key="3">
    <source>
    </source>
</evidence>
<evidence type="ECO:0000303" key="4">
    <source>
    </source>
</evidence>
<evidence type="ECO:0000305" key="5"/>
<evidence type="ECO:0000305" key="6">
    <source>
    </source>
</evidence>
<protein>
    <recommendedName>
        <fullName evidence="4">Basic phospholipase A2 BmatTX-III</fullName>
        <shortName>svPLA2</shortName>
        <ecNumber evidence="3">3.1.1.4</ecNumber>
    </recommendedName>
    <alternativeName>
        <fullName>Asp49 PLA2</fullName>
    </alternativeName>
    <alternativeName>
        <fullName>Phosphatidylcholine 2-acylhydrolase</fullName>
    </alternativeName>
</protein>
<reference key="1">
    <citation type="journal article" date="2014" name="Biomed. Res. Int.">
        <title>Purification and biochemical characterization of three myotoxins from Bothrops mattogrossensis snake venom with toxicity against Leishmania and tumor cells.</title>
        <authorList>
            <person name="de Moura A.A."/>
            <person name="Kayano A.M."/>
            <person name="Oliveira G.A."/>
            <person name="Setubal S.S."/>
            <person name="Ribeiro J.G."/>
            <person name="Barros N.B."/>
            <person name="Nicolete R."/>
            <person name="Moura L.A."/>
            <person name="Fuly A.L."/>
            <person name="Nomizo A."/>
            <person name="da Silva S.L."/>
            <person name="Fernandes C.F."/>
            <person name="Zuliani J.P."/>
            <person name="Stabeli R.G."/>
            <person name="Soares A.M."/>
            <person name="Calderon L.A."/>
        </authorList>
    </citation>
    <scope>PROTEIN SEQUENCE</scope>
    <scope>FUNCTION</scope>
    <scope>SUBUNIT</scope>
    <scope>CATALYTIC ACTIVITY</scope>
    <scope>MASS SPECTROMETRY</scope>
    <scope>SUBCELLULAR LOCATION</scope>
</reference>
<accession>P0DMK1</accession>
<sequence>DLWELAKMILKETGKNPLPSYGAYGCYCGWGG</sequence>
<keyword id="KW-0106">Calcium</keyword>
<keyword id="KW-0903">Direct protein sequencing</keyword>
<keyword id="KW-1015">Disulfide bond</keyword>
<keyword id="KW-0378">Hydrolase</keyword>
<keyword id="KW-0442">Lipid degradation</keyword>
<keyword id="KW-0443">Lipid metabolism</keyword>
<keyword id="KW-0479">Metal-binding</keyword>
<keyword id="KW-0959">Myotoxin</keyword>
<keyword id="KW-0964">Secreted</keyword>
<keyword id="KW-0800">Toxin</keyword>
<comment type="function">
    <text evidence="3">Snake venom phospholipase A2 that shows high myotoxic activity, slight neutrophil activation (demonstrated by activation induction of IL-1beta production), slight cytotoxicity against Jurkat (leukemia T) and SK-BR-3 (breast adenocarcinoma) tumor cell lines, and slight antiparasitic activity against promastigote forms of Leishmania amazonensis. PLA2 catalyzes the calcium-dependent hydrolysis of the 2-acyl groups in 3-sn-phosphoglycerides.</text>
</comment>
<comment type="catalytic activity">
    <reaction evidence="3">
        <text>a 1,2-diacyl-sn-glycero-3-phosphocholine + H2O = a 1-acyl-sn-glycero-3-phosphocholine + a fatty acid + H(+)</text>
        <dbReference type="Rhea" id="RHEA:15801"/>
        <dbReference type="ChEBI" id="CHEBI:15377"/>
        <dbReference type="ChEBI" id="CHEBI:15378"/>
        <dbReference type="ChEBI" id="CHEBI:28868"/>
        <dbReference type="ChEBI" id="CHEBI:57643"/>
        <dbReference type="ChEBI" id="CHEBI:58168"/>
        <dbReference type="EC" id="3.1.1.4"/>
    </reaction>
</comment>
<comment type="cofactor">
    <cofactor evidence="1">
        <name>Ca(2+)</name>
        <dbReference type="ChEBI" id="CHEBI:29108"/>
    </cofactor>
    <text evidence="1">Binds 1 Ca(2+) ion.</text>
</comment>
<comment type="subunit">
    <text evidence="3">Monomer.</text>
</comment>
<comment type="subcellular location">
    <subcellularLocation>
        <location evidence="3">Secreted</location>
    </subcellularLocation>
</comment>
<comment type="tissue specificity">
    <text evidence="6">Expressed by the venom gland.</text>
</comment>
<comment type="mass spectrometry"/>
<comment type="miscellaneous">
    <text evidence="6">Does not induce platelet aggregation and does not inhibit collagen or ADP-induced platelet aggregation.</text>
</comment>
<comment type="similarity">
    <text evidence="5">Belongs to the phospholipase A2 family. Group II subfamily. K49 sub-subfamily.</text>
</comment>
<name>PA23_BOTMT</name>